<keyword id="KW-1003">Cell membrane</keyword>
<keyword id="KW-0325">Glycoprotein</keyword>
<keyword id="KW-0472">Membrane</keyword>
<keyword id="KW-0552">Olfaction</keyword>
<keyword id="KW-0675">Receptor</keyword>
<keyword id="KW-1185">Reference proteome</keyword>
<keyword id="KW-0716">Sensory transduction</keyword>
<keyword id="KW-0807">Transducer</keyword>
<keyword id="KW-0812">Transmembrane</keyword>
<keyword id="KW-1133">Transmembrane helix</keyword>
<accession>Q9V3Q2</accession>
<accession>Q8IP41</accession>
<organism>
    <name type="scientific">Drosophila melanogaster</name>
    <name type="common">Fruit fly</name>
    <dbReference type="NCBI Taxonomy" id="7227"/>
    <lineage>
        <taxon>Eukaryota</taxon>
        <taxon>Metazoa</taxon>
        <taxon>Ecdysozoa</taxon>
        <taxon>Arthropoda</taxon>
        <taxon>Hexapoda</taxon>
        <taxon>Insecta</taxon>
        <taxon>Pterygota</taxon>
        <taxon>Neoptera</taxon>
        <taxon>Endopterygota</taxon>
        <taxon>Diptera</taxon>
        <taxon>Brachycera</taxon>
        <taxon>Muscomorpha</taxon>
        <taxon>Ephydroidea</taxon>
        <taxon>Drosophilidae</taxon>
        <taxon>Drosophila</taxon>
        <taxon>Sophophora</taxon>
    </lineage>
</organism>
<name>OR35A_DROME</name>
<reference key="1">
    <citation type="journal article" date="1999" name="Genetics">
        <title>An exploration of the sequence of a 2.9-Mb region of the genome of Drosophila melanogaster: the Adh region.</title>
        <authorList>
            <person name="Ashburner M."/>
            <person name="Misra S."/>
            <person name="Roote J."/>
            <person name="Lewis S.E."/>
            <person name="Blazej R.G."/>
            <person name="Davis T."/>
            <person name="Doyle C."/>
            <person name="Galle R.F."/>
            <person name="George R.A."/>
            <person name="Harris N.L."/>
            <person name="Hartzell G."/>
            <person name="Harvey D.A."/>
            <person name="Hong L."/>
            <person name="Houston K.A."/>
            <person name="Hoskins R.A."/>
            <person name="Johnson G."/>
            <person name="Martin C."/>
            <person name="Moshrefi A.R."/>
            <person name="Palazzolo M."/>
            <person name="Reese M.G."/>
            <person name="Spradling A.C."/>
            <person name="Tsang G."/>
            <person name="Wan K.H."/>
            <person name="Whitelaw K."/>
            <person name="Celniker S.E."/>
            <person name="Rubin G.M."/>
        </authorList>
    </citation>
    <scope>NUCLEOTIDE SEQUENCE [LARGE SCALE GENOMIC DNA]</scope>
    <source>
        <strain>Berkeley</strain>
    </source>
</reference>
<reference key="2">
    <citation type="journal article" date="2000" name="Science">
        <title>The genome sequence of Drosophila melanogaster.</title>
        <authorList>
            <person name="Adams M.D."/>
            <person name="Celniker S.E."/>
            <person name="Holt R.A."/>
            <person name="Evans C.A."/>
            <person name="Gocayne J.D."/>
            <person name="Amanatides P.G."/>
            <person name="Scherer S.E."/>
            <person name="Li P.W."/>
            <person name="Hoskins R.A."/>
            <person name="Galle R.F."/>
            <person name="George R.A."/>
            <person name="Lewis S.E."/>
            <person name="Richards S."/>
            <person name="Ashburner M."/>
            <person name="Henderson S.N."/>
            <person name="Sutton G.G."/>
            <person name="Wortman J.R."/>
            <person name="Yandell M.D."/>
            <person name="Zhang Q."/>
            <person name="Chen L.X."/>
            <person name="Brandon R.C."/>
            <person name="Rogers Y.-H.C."/>
            <person name="Blazej R.G."/>
            <person name="Champe M."/>
            <person name="Pfeiffer B.D."/>
            <person name="Wan K.H."/>
            <person name="Doyle C."/>
            <person name="Baxter E.G."/>
            <person name="Helt G."/>
            <person name="Nelson C.R."/>
            <person name="Miklos G.L.G."/>
            <person name="Abril J.F."/>
            <person name="Agbayani A."/>
            <person name="An H.-J."/>
            <person name="Andrews-Pfannkoch C."/>
            <person name="Baldwin D."/>
            <person name="Ballew R.M."/>
            <person name="Basu A."/>
            <person name="Baxendale J."/>
            <person name="Bayraktaroglu L."/>
            <person name="Beasley E.M."/>
            <person name="Beeson K.Y."/>
            <person name="Benos P.V."/>
            <person name="Berman B.P."/>
            <person name="Bhandari D."/>
            <person name="Bolshakov S."/>
            <person name="Borkova D."/>
            <person name="Botchan M.R."/>
            <person name="Bouck J."/>
            <person name="Brokstein P."/>
            <person name="Brottier P."/>
            <person name="Burtis K.C."/>
            <person name="Busam D.A."/>
            <person name="Butler H."/>
            <person name="Cadieu E."/>
            <person name="Center A."/>
            <person name="Chandra I."/>
            <person name="Cherry J.M."/>
            <person name="Cawley S."/>
            <person name="Dahlke C."/>
            <person name="Davenport L.B."/>
            <person name="Davies P."/>
            <person name="de Pablos B."/>
            <person name="Delcher A."/>
            <person name="Deng Z."/>
            <person name="Mays A.D."/>
            <person name="Dew I."/>
            <person name="Dietz S.M."/>
            <person name="Dodson K."/>
            <person name="Doup L.E."/>
            <person name="Downes M."/>
            <person name="Dugan-Rocha S."/>
            <person name="Dunkov B.C."/>
            <person name="Dunn P."/>
            <person name="Durbin K.J."/>
            <person name="Evangelista C.C."/>
            <person name="Ferraz C."/>
            <person name="Ferriera S."/>
            <person name="Fleischmann W."/>
            <person name="Fosler C."/>
            <person name="Gabrielian A.E."/>
            <person name="Garg N.S."/>
            <person name="Gelbart W.M."/>
            <person name="Glasser K."/>
            <person name="Glodek A."/>
            <person name="Gong F."/>
            <person name="Gorrell J.H."/>
            <person name="Gu Z."/>
            <person name="Guan P."/>
            <person name="Harris M."/>
            <person name="Harris N.L."/>
            <person name="Harvey D.A."/>
            <person name="Heiman T.J."/>
            <person name="Hernandez J.R."/>
            <person name="Houck J."/>
            <person name="Hostin D."/>
            <person name="Houston K.A."/>
            <person name="Howland T.J."/>
            <person name="Wei M.-H."/>
            <person name="Ibegwam C."/>
            <person name="Jalali M."/>
            <person name="Kalush F."/>
            <person name="Karpen G.H."/>
            <person name="Ke Z."/>
            <person name="Kennison J.A."/>
            <person name="Ketchum K.A."/>
            <person name="Kimmel B.E."/>
            <person name="Kodira C.D."/>
            <person name="Kraft C.L."/>
            <person name="Kravitz S."/>
            <person name="Kulp D."/>
            <person name="Lai Z."/>
            <person name="Lasko P."/>
            <person name="Lei Y."/>
            <person name="Levitsky A.A."/>
            <person name="Li J.H."/>
            <person name="Li Z."/>
            <person name="Liang Y."/>
            <person name="Lin X."/>
            <person name="Liu X."/>
            <person name="Mattei B."/>
            <person name="McIntosh T.C."/>
            <person name="McLeod M.P."/>
            <person name="McPherson D."/>
            <person name="Merkulov G."/>
            <person name="Milshina N.V."/>
            <person name="Mobarry C."/>
            <person name="Morris J."/>
            <person name="Moshrefi A."/>
            <person name="Mount S.M."/>
            <person name="Moy M."/>
            <person name="Murphy B."/>
            <person name="Murphy L."/>
            <person name="Muzny D.M."/>
            <person name="Nelson D.L."/>
            <person name="Nelson D.R."/>
            <person name="Nelson K.A."/>
            <person name="Nixon K."/>
            <person name="Nusskern D.R."/>
            <person name="Pacleb J.M."/>
            <person name="Palazzolo M."/>
            <person name="Pittman G.S."/>
            <person name="Pan S."/>
            <person name="Pollard J."/>
            <person name="Puri V."/>
            <person name="Reese M.G."/>
            <person name="Reinert K."/>
            <person name="Remington K."/>
            <person name="Saunders R.D.C."/>
            <person name="Scheeler F."/>
            <person name="Shen H."/>
            <person name="Shue B.C."/>
            <person name="Siden-Kiamos I."/>
            <person name="Simpson M."/>
            <person name="Skupski M.P."/>
            <person name="Smith T.J."/>
            <person name="Spier E."/>
            <person name="Spradling A.C."/>
            <person name="Stapleton M."/>
            <person name="Strong R."/>
            <person name="Sun E."/>
            <person name="Svirskas R."/>
            <person name="Tector C."/>
            <person name="Turner R."/>
            <person name="Venter E."/>
            <person name="Wang A.H."/>
            <person name="Wang X."/>
            <person name="Wang Z.-Y."/>
            <person name="Wassarman D.A."/>
            <person name="Weinstock G.M."/>
            <person name="Weissenbach J."/>
            <person name="Williams S.M."/>
            <person name="Woodage T."/>
            <person name="Worley K.C."/>
            <person name="Wu D."/>
            <person name="Yang S."/>
            <person name="Yao Q.A."/>
            <person name="Ye J."/>
            <person name="Yeh R.-F."/>
            <person name="Zaveri J.S."/>
            <person name="Zhan M."/>
            <person name="Zhang G."/>
            <person name="Zhao Q."/>
            <person name="Zheng L."/>
            <person name="Zheng X.H."/>
            <person name="Zhong F.N."/>
            <person name="Zhong W."/>
            <person name="Zhou X."/>
            <person name="Zhu S.C."/>
            <person name="Zhu X."/>
            <person name="Smith H.O."/>
            <person name="Gibbs R.A."/>
            <person name="Myers E.W."/>
            <person name="Rubin G.M."/>
            <person name="Venter J.C."/>
        </authorList>
    </citation>
    <scope>NUCLEOTIDE SEQUENCE [LARGE SCALE GENOMIC DNA]</scope>
    <source>
        <strain>Berkeley</strain>
    </source>
</reference>
<reference key="3">
    <citation type="journal article" date="2002" name="Genome Biol.">
        <title>Annotation of the Drosophila melanogaster euchromatic genome: a systematic review.</title>
        <authorList>
            <person name="Misra S."/>
            <person name="Crosby M.A."/>
            <person name="Mungall C.J."/>
            <person name="Matthews B.B."/>
            <person name="Campbell K.S."/>
            <person name="Hradecky P."/>
            <person name="Huang Y."/>
            <person name="Kaminker J.S."/>
            <person name="Millburn G.H."/>
            <person name="Prochnik S.E."/>
            <person name="Smith C.D."/>
            <person name="Tupy J.L."/>
            <person name="Whitfield E.J."/>
            <person name="Bayraktaroglu L."/>
            <person name="Berman B.P."/>
            <person name="Bettencourt B.R."/>
            <person name="Celniker S.E."/>
            <person name="de Grey A.D.N.J."/>
            <person name="Drysdale R.A."/>
            <person name="Harris N.L."/>
            <person name="Richter J."/>
            <person name="Russo S."/>
            <person name="Schroeder A.J."/>
            <person name="Shu S.Q."/>
            <person name="Stapleton M."/>
            <person name="Yamada C."/>
            <person name="Ashburner M."/>
            <person name="Gelbart W.M."/>
            <person name="Rubin G.M."/>
            <person name="Lewis S.E."/>
        </authorList>
    </citation>
    <scope>GENOME REANNOTATION</scope>
    <source>
        <strain>Berkeley</strain>
    </source>
</reference>
<reference key="4">
    <citation type="journal article" date="2000" name="Cell">
        <title>An olfactory sensory map in the fly brain.</title>
        <authorList>
            <person name="Vosshall L.B."/>
            <person name="Wong A.M."/>
            <person name="Axel R."/>
        </authorList>
    </citation>
    <scope>TISSUE SPECIFICITY</scope>
</reference>
<reference key="5">
    <citation type="journal article" date="2005" name="J. Neurosci.">
        <title>Chemosensory coding by neurons in the coeloconic sensilla of the Drosophila antenna.</title>
        <authorList>
            <person name="Yao C.A."/>
            <person name="Ignell R."/>
            <person name="Carlson J.R."/>
        </authorList>
    </citation>
    <scope>TISSUE SPECIFICITY</scope>
    <scope>FUNCTION</scope>
</reference>
<reference key="6">
    <citation type="journal article" date="2006" name="Cell">
        <title>Coding of odors by a receptor repertoire.</title>
        <authorList>
            <person name="Hallem E.A."/>
            <person name="Carlson J.R."/>
        </authorList>
    </citation>
    <scope>FUNCTION</scope>
</reference>
<reference key="7">
    <citation type="journal article" date="2011" name="Chem. Senses">
        <title>Subunit contributions to insect olfactory receptor function: channel block and odorant recognition.</title>
        <authorList>
            <person name="Nichols A.S."/>
            <person name="Chen S."/>
            <person name="Luetje C.W."/>
        </authorList>
    </citation>
    <scope>INTERACTION WITH ORCO</scope>
    <scope>FUNCTION</scope>
</reference>
<reference key="8">
    <citation type="journal article" date="2011" name="J. Neurosci.">
        <title>Similar odorants elicit different behavioral and physiological responses, some supersustained.</title>
        <authorList>
            <person name="Montague S.A."/>
            <person name="Mathew D."/>
            <person name="Carlson J.R."/>
        </authorList>
    </citation>
    <scope>FUNCTION</scope>
</reference>
<reference key="9">
    <citation type="journal article" date="2011" name="PLoS ONE">
        <title>Modeling peripheral olfactory coding in Drosophila larvae.</title>
        <authorList>
            <person name="Hoare D.J."/>
            <person name="Humble J."/>
            <person name="Jin D."/>
            <person name="Gilding N."/>
            <person name="Petersen R."/>
            <person name="Cobb M."/>
            <person name="McCrohan C."/>
        </authorList>
    </citation>
    <scope>FUNCTION</scope>
</reference>
<reference key="10">
    <citation type="journal article" date="2012" name="Chem. Senses">
        <title>Genetic variation in odorant receptors contributes to variation in olfactory behavior in a natural population of Drosophila melanogaster.</title>
        <authorList>
            <person name="Richgels P.K."/>
            <person name="Rollmann S.M."/>
        </authorList>
    </citation>
    <scope>FUNCTION</scope>
</reference>
<feature type="chain" id="PRO_0000174241" description="Odorant receptor 35a">
    <location>
        <begin position="1"/>
        <end position="409"/>
    </location>
</feature>
<feature type="topological domain" description="Cytoplasmic" evidence="2">
    <location>
        <begin position="1"/>
        <end position="35"/>
    </location>
</feature>
<feature type="transmembrane region" description="Helical; Name=1" evidence="2">
    <location>
        <begin position="36"/>
        <end position="56"/>
    </location>
</feature>
<feature type="topological domain" description="Extracellular" evidence="2">
    <location>
        <begin position="57"/>
        <end position="64"/>
    </location>
</feature>
<feature type="transmembrane region" description="Helical; Name=2" evidence="2">
    <location>
        <begin position="65"/>
        <end position="85"/>
    </location>
</feature>
<feature type="topological domain" description="Cytoplasmic" evidence="2">
    <location>
        <begin position="86"/>
        <end position="139"/>
    </location>
</feature>
<feature type="transmembrane region" description="Helical; Name=3" evidence="2">
    <location>
        <begin position="140"/>
        <end position="160"/>
    </location>
</feature>
<feature type="topological domain" description="Extracellular" evidence="2">
    <location>
        <begin position="161"/>
        <end position="177"/>
    </location>
</feature>
<feature type="transmembrane region" description="Helical; Name=4" evidence="2">
    <location>
        <begin position="178"/>
        <end position="198"/>
    </location>
</feature>
<feature type="topological domain" description="Cytoplasmic" evidence="2">
    <location>
        <begin position="199"/>
        <end position="273"/>
    </location>
</feature>
<feature type="transmembrane region" description="Helical; Name=5" evidence="2">
    <location>
        <begin position="274"/>
        <end position="294"/>
    </location>
</feature>
<feature type="topological domain" description="Extracellular" evidence="2">
    <location>
        <begin position="295"/>
        <end position="302"/>
    </location>
</feature>
<feature type="transmembrane region" description="Helical; Name=6" evidence="2">
    <location>
        <begin position="303"/>
        <end position="323"/>
    </location>
</feature>
<feature type="topological domain" description="Cytoplasmic" evidence="2">
    <location>
        <begin position="324"/>
        <end position="379"/>
    </location>
</feature>
<feature type="transmembrane region" description="Helical; Name=7" evidence="2">
    <location>
        <begin position="380"/>
        <end position="400"/>
    </location>
</feature>
<feature type="topological domain" description="Extracellular" evidence="2">
    <location>
        <begin position="401"/>
        <end position="409"/>
    </location>
</feature>
<feature type="glycosylation site" description="N-linked (GlcNAc...) asparagine" evidence="2">
    <location>
        <position position="161"/>
    </location>
</feature>
<sequence length="409" mass="47388">MVRYVPRFADGQKVKLAWPLAVFRLNHIFWPLDPSTGKWGRYLDKVLAVAMSLVFMQHNDAELRYLRFEASNRNLDAFLTGMPTYLILVEAQFRSLHILLHFEKLQKFLEIFYANIYIDPRKEPEMFRKVDGKMIINRLVSAMYGAVISLYLIAPVFSIINQSKDFLYSMIFPFDSDPLYIFVPLLLTNVWVGIVIDTMMFGETNLLCELIVHLNGSYMLLKRDLQLAIEKILVARDRPHMAKQLKVLITKTLRKNVALNQFGQQLEAQYTVRVFIMFAFAAGLLCALSFKAYTNPMANYIYAIWFGAKTVELLSLGQIGSDLAFTTDSLSTMYYLTHWEQILQYSTNPSENLRLLKLINLAIEMNSKPFYVTGLKYFRVSLQAGLKILQASFSYFTFLTSMQRRQMSN</sequence>
<gene>
    <name type="primary">Or35a</name>
    <name type="ORF">CG17868</name>
</gene>
<dbReference type="EMBL" id="AE014134">
    <property type="protein sequence ID" value="AAN10901.1"/>
    <property type="molecule type" value="Genomic_DNA"/>
</dbReference>
<dbReference type="RefSeq" id="NP_723916.1">
    <property type="nucleotide sequence ID" value="NM_165117.2"/>
</dbReference>
<dbReference type="SMR" id="Q9V3Q2"/>
<dbReference type="FunCoup" id="Q9V3Q2">
    <property type="interactions" value="17"/>
</dbReference>
<dbReference type="STRING" id="7227.FBpp0080339"/>
<dbReference type="GlyCosmos" id="Q9V3Q2">
    <property type="glycosylation" value="1 site, No reported glycans"/>
</dbReference>
<dbReference type="GlyGen" id="Q9V3Q2">
    <property type="glycosylation" value="1 site"/>
</dbReference>
<dbReference type="PaxDb" id="7227-FBpp0080339"/>
<dbReference type="EnsemblMetazoa" id="FBtr0080781">
    <property type="protein sequence ID" value="FBpp0080339"/>
    <property type="gene ID" value="FBgn0028946"/>
</dbReference>
<dbReference type="GeneID" id="34918"/>
<dbReference type="KEGG" id="dme:Dmel_CG17868"/>
<dbReference type="AGR" id="FB:FBgn0028946"/>
<dbReference type="CTD" id="34918"/>
<dbReference type="FlyBase" id="FBgn0028946">
    <property type="gene designation" value="Or35a"/>
</dbReference>
<dbReference type="VEuPathDB" id="VectorBase:FBgn0028946"/>
<dbReference type="eggNOG" id="ENOG502T9IC">
    <property type="taxonomic scope" value="Eukaryota"/>
</dbReference>
<dbReference type="GeneTree" id="ENSGT00560000077544"/>
<dbReference type="HOGENOM" id="CLU_687484_0_0_1"/>
<dbReference type="InParanoid" id="Q9V3Q2"/>
<dbReference type="OMA" id="KDFLYSM"/>
<dbReference type="OrthoDB" id="7845758at2759"/>
<dbReference type="PhylomeDB" id="Q9V3Q2"/>
<dbReference type="BioGRID-ORCS" id="34918">
    <property type="hits" value="0 hits in 1 CRISPR screen"/>
</dbReference>
<dbReference type="GenomeRNAi" id="34918"/>
<dbReference type="PRO" id="PR:Q9V3Q2"/>
<dbReference type="Proteomes" id="UP000000803">
    <property type="component" value="Chromosome 2L"/>
</dbReference>
<dbReference type="Bgee" id="FBgn0028946">
    <property type="expression patterns" value="Expressed in antennal olfactory receptor neuron of coeloconic sensillum in antenna and 5 other cell types or tissues"/>
</dbReference>
<dbReference type="ExpressionAtlas" id="Q9V3Q2">
    <property type="expression patterns" value="baseline and differential"/>
</dbReference>
<dbReference type="GO" id="GO:0032590">
    <property type="term" value="C:dendrite membrane"/>
    <property type="evidence" value="ECO:0000250"/>
    <property type="project" value="FlyBase"/>
</dbReference>
<dbReference type="GO" id="GO:0005886">
    <property type="term" value="C:plasma membrane"/>
    <property type="evidence" value="ECO:0007005"/>
    <property type="project" value="FlyBase"/>
</dbReference>
<dbReference type="GO" id="GO:0170020">
    <property type="term" value="F:ionotropic olfactory receptor activity"/>
    <property type="evidence" value="ECO:0000314"/>
    <property type="project" value="FlyBase"/>
</dbReference>
<dbReference type="GO" id="GO:0099094">
    <property type="term" value="F:ligand-gated monoatomic cation channel activity"/>
    <property type="evidence" value="ECO:0000314"/>
    <property type="project" value="FlyBase"/>
</dbReference>
<dbReference type="GO" id="GO:0005549">
    <property type="term" value="F:odorant binding"/>
    <property type="evidence" value="ECO:0000250"/>
    <property type="project" value="FlyBase"/>
</dbReference>
<dbReference type="GO" id="GO:0004984">
    <property type="term" value="F:olfactory receptor activity"/>
    <property type="evidence" value="ECO:0000318"/>
    <property type="project" value="GO_Central"/>
</dbReference>
<dbReference type="GO" id="GO:0050911">
    <property type="term" value="P:detection of chemical stimulus involved in sensory perception of smell"/>
    <property type="evidence" value="ECO:0007005"/>
    <property type="project" value="FlyBase"/>
</dbReference>
<dbReference type="GO" id="GO:0098655">
    <property type="term" value="P:monoatomic cation transmembrane transport"/>
    <property type="evidence" value="ECO:0000314"/>
    <property type="project" value="FlyBase"/>
</dbReference>
<dbReference type="GO" id="GO:0007165">
    <property type="term" value="P:signal transduction"/>
    <property type="evidence" value="ECO:0007669"/>
    <property type="project" value="UniProtKB-KW"/>
</dbReference>
<dbReference type="InterPro" id="IPR004117">
    <property type="entry name" value="7tm6_olfct_rcpt"/>
</dbReference>
<dbReference type="PANTHER" id="PTHR21137">
    <property type="entry name" value="ODORANT RECEPTOR"/>
    <property type="match status" value="1"/>
</dbReference>
<dbReference type="PANTHER" id="PTHR21137:SF35">
    <property type="entry name" value="ODORANT RECEPTOR 19A-RELATED"/>
    <property type="match status" value="1"/>
</dbReference>
<comment type="function">
    <text evidence="4 5 6 7 8 9">Odorant receptor which mediates acceptance or avoidance behavior, depending on its substrates. The odorant receptor repertoire encodes a large collection of odor stimuli that vary widely in identity, intensity, and duration. Forms a complex with Orco to form odorant-sensing units, providing sensitive and prolonged odorant signaling and calcium permeability. Involved in the behavioral responses to esters. Involved in the behavioral responses to butanol, pentanol, hexanol, octanol, propyl acetate, and butyl acetate.</text>
</comment>
<comment type="subunit">
    <text evidence="7">Interacts with Orco. Complexes exist early in the endomembrane system in olfactory sensory neurons (OSNs), coupling these complexes to the conserved ciliary trafficking pathway.</text>
</comment>
<comment type="subcellular location">
    <subcellularLocation>
        <location evidence="1">Cell membrane</location>
        <topology evidence="1">Multi-pass membrane protein</topology>
    </subcellularLocation>
</comment>
<comment type="tissue specificity">
    <text evidence="3 4">Expressed in ac3B olfactory sensory neurons in the antenna.</text>
</comment>
<comment type="miscellaneous">
    <text>The atypical heteromeric and topological design of the odorant receptors appears to be an insect-specific solution for odor recognition, making the OR/Orco complex an attractive target for the development of highly selective insect repellents to disrupt olfactory-mediated host-seeking behaviors of insect disease vectors. Odor-evoked OR currents are independent of known G-protein-coupled second messenger pathways.</text>
</comment>
<comment type="similarity">
    <text evidence="10">Belongs to the insect chemoreceptor superfamily. Heteromeric odorant receptor channel (TC 1.A.69) family. Or1a subfamily.</text>
</comment>
<evidence type="ECO:0000250" key="1"/>
<evidence type="ECO:0000255" key="2"/>
<evidence type="ECO:0000269" key="3">
    <source>
    </source>
</evidence>
<evidence type="ECO:0000269" key="4">
    <source>
    </source>
</evidence>
<evidence type="ECO:0000269" key="5">
    <source>
    </source>
</evidence>
<evidence type="ECO:0000269" key="6">
    <source>
    </source>
</evidence>
<evidence type="ECO:0000269" key="7">
    <source>
    </source>
</evidence>
<evidence type="ECO:0000269" key="8">
    <source>
    </source>
</evidence>
<evidence type="ECO:0000269" key="9">
    <source>
    </source>
</evidence>
<evidence type="ECO:0000305" key="10"/>
<protein>
    <recommendedName>
        <fullName>Odorant receptor 35a</fullName>
    </recommendedName>
</protein>
<proteinExistence type="evidence at protein level"/>